<keyword id="KW-0002">3D-structure</keyword>
<keyword id="KW-0025">Alternative splicing</keyword>
<keyword id="KW-0965">Cell junction</keyword>
<keyword id="KW-0966">Cell projection</keyword>
<keyword id="KW-1186">Ciliopathy</keyword>
<keyword id="KW-0969">Cilium</keyword>
<keyword id="KW-0970">Cilium biogenesis/degradation</keyword>
<keyword id="KW-0175">Coiled coil</keyword>
<keyword id="KW-0963">Cytoplasm</keyword>
<keyword id="KW-0206">Cytoskeleton</keyword>
<keyword id="KW-0221">Differentiation</keyword>
<keyword id="KW-0225">Disease variant</keyword>
<keyword id="KW-0979">Joubert syndrome</keyword>
<keyword id="KW-0901">Leber congenital amaurosis</keyword>
<keyword id="KW-0983">Nephronophthisis</keyword>
<keyword id="KW-0597">Phosphoprotein</keyword>
<keyword id="KW-1267">Proteomics identification</keyword>
<keyword id="KW-1185">Reference proteome</keyword>
<keyword id="KW-0980">Senior-Loken syndrome</keyword>
<keyword id="KW-0728">SH3 domain</keyword>
<keyword id="KW-0744">Spermatogenesis</keyword>
<keyword id="KW-0796">Tight junction</keyword>
<reference key="1">
    <citation type="journal article" date="1997" name="Hum. Mol. Genet.">
        <title>A novel gene that encodes a protein with a putative src homology 3 domain is a candidate gene for familial juvenile nephronophthisis.</title>
        <authorList>
            <person name="Saunier S."/>
            <person name="Calado J."/>
            <person name="Heilig R."/>
            <person name="Silbermann F."/>
            <person name="Benessy F."/>
            <person name="Morin G."/>
            <person name="Konrad M."/>
            <person name="Broyer M."/>
            <person name="Gubler M.-C."/>
            <person name="Weissenbach J."/>
            <person name="Antignac C."/>
        </authorList>
    </citation>
    <scope>NUCLEOTIDE SEQUENCE [MRNA] (ISOFORMS 1 AND 2)</scope>
    <source>
        <tissue>Fetal kidney</tissue>
    </source>
</reference>
<reference key="2">
    <citation type="journal article" date="1997" name="Nat. Genet.">
        <title>A novel gene encoding an SH3 domain protein is mutated in nephronophthisis type 1.</title>
        <authorList>
            <person name="Hildebrandt F."/>
            <person name="Otto E."/>
            <person name="Rensing C."/>
            <person name="Nothwang H.G."/>
            <person name="Vollmer M."/>
            <person name="Adolphs J."/>
            <person name="Hanusch H."/>
            <person name="Brandis M."/>
        </authorList>
    </citation>
    <scope>NUCLEOTIDE SEQUENCE [MRNA] OF 3-732 (ISOFORM 4)</scope>
    <scope>ALTERNATIVE SPLICING</scope>
</reference>
<reference key="3">
    <citation type="journal article" date="2005" name="Nature">
        <title>Generation and annotation of the DNA sequences of human chromosomes 2 and 4.</title>
        <authorList>
            <person name="Hillier L.W."/>
            <person name="Graves T.A."/>
            <person name="Fulton R.S."/>
            <person name="Fulton L.A."/>
            <person name="Pepin K.H."/>
            <person name="Minx P."/>
            <person name="Wagner-McPherson C."/>
            <person name="Layman D."/>
            <person name="Wylie K."/>
            <person name="Sekhon M."/>
            <person name="Becker M.C."/>
            <person name="Fewell G.A."/>
            <person name="Delehaunty K.D."/>
            <person name="Miner T.L."/>
            <person name="Nash W.E."/>
            <person name="Kremitzki C."/>
            <person name="Oddy L."/>
            <person name="Du H."/>
            <person name="Sun H."/>
            <person name="Bradshaw-Cordum H."/>
            <person name="Ali J."/>
            <person name="Carter J."/>
            <person name="Cordes M."/>
            <person name="Harris A."/>
            <person name="Isak A."/>
            <person name="van Brunt A."/>
            <person name="Nguyen C."/>
            <person name="Du F."/>
            <person name="Courtney L."/>
            <person name="Kalicki J."/>
            <person name="Ozersky P."/>
            <person name="Abbott S."/>
            <person name="Armstrong J."/>
            <person name="Belter E.A."/>
            <person name="Caruso L."/>
            <person name="Cedroni M."/>
            <person name="Cotton M."/>
            <person name="Davidson T."/>
            <person name="Desai A."/>
            <person name="Elliott G."/>
            <person name="Erb T."/>
            <person name="Fronick C."/>
            <person name="Gaige T."/>
            <person name="Haakenson W."/>
            <person name="Haglund K."/>
            <person name="Holmes A."/>
            <person name="Harkins R."/>
            <person name="Kim K."/>
            <person name="Kruchowski S.S."/>
            <person name="Strong C.M."/>
            <person name="Grewal N."/>
            <person name="Goyea E."/>
            <person name="Hou S."/>
            <person name="Levy A."/>
            <person name="Martinka S."/>
            <person name="Mead K."/>
            <person name="McLellan M.D."/>
            <person name="Meyer R."/>
            <person name="Randall-Maher J."/>
            <person name="Tomlinson C."/>
            <person name="Dauphin-Kohlberg S."/>
            <person name="Kozlowicz-Reilly A."/>
            <person name="Shah N."/>
            <person name="Swearengen-Shahid S."/>
            <person name="Snider J."/>
            <person name="Strong J.T."/>
            <person name="Thompson J."/>
            <person name="Yoakum M."/>
            <person name="Leonard S."/>
            <person name="Pearman C."/>
            <person name="Trani L."/>
            <person name="Radionenko M."/>
            <person name="Waligorski J.E."/>
            <person name="Wang C."/>
            <person name="Rock S.M."/>
            <person name="Tin-Wollam A.-M."/>
            <person name="Maupin R."/>
            <person name="Latreille P."/>
            <person name="Wendl M.C."/>
            <person name="Yang S.-P."/>
            <person name="Pohl C."/>
            <person name="Wallis J.W."/>
            <person name="Spieth J."/>
            <person name="Bieri T.A."/>
            <person name="Berkowicz N."/>
            <person name="Nelson J.O."/>
            <person name="Osborne J."/>
            <person name="Ding L."/>
            <person name="Meyer R."/>
            <person name="Sabo A."/>
            <person name="Shotland Y."/>
            <person name="Sinha P."/>
            <person name="Wohldmann P.E."/>
            <person name="Cook L.L."/>
            <person name="Hickenbotham M.T."/>
            <person name="Eldred J."/>
            <person name="Williams D."/>
            <person name="Jones T.A."/>
            <person name="She X."/>
            <person name="Ciccarelli F.D."/>
            <person name="Izaurralde E."/>
            <person name="Taylor J."/>
            <person name="Schmutz J."/>
            <person name="Myers R.M."/>
            <person name="Cox D.R."/>
            <person name="Huang X."/>
            <person name="McPherson J.D."/>
            <person name="Mardis E.R."/>
            <person name="Clifton S.W."/>
            <person name="Warren W.C."/>
            <person name="Chinwalla A.T."/>
            <person name="Eddy S.R."/>
            <person name="Marra M.A."/>
            <person name="Ovcharenko I."/>
            <person name="Furey T.S."/>
            <person name="Miller W."/>
            <person name="Eichler E.E."/>
            <person name="Bork P."/>
            <person name="Suyama M."/>
            <person name="Torrents D."/>
            <person name="Waterston R.H."/>
            <person name="Wilson R.K."/>
        </authorList>
    </citation>
    <scope>NUCLEOTIDE SEQUENCE [LARGE SCALE GENOMIC DNA]</scope>
</reference>
<reference key="4">
    <citation type="journal article" date="2004" name="Genome Res.">
        <title>The status, quality, and expansion of the NIH full-length cDNA project: the Mammalian Gene Collection (MGC).</title>
        <authorList>
            <consortium name="The MGC Project Team"/>
        </authorList>
    </citation>
    <scope>NUCLEOTIDE SEQUENCE [LARGE SCALE MRNA] (ISOFORM 3)</scope>
</reference>
<reference key="5">
    <citation type="journal article" date="1998" name="Am. J. Kidney Dis.">
        <title>Renal-retinal syndromes: association of retinal anomalies and recessive nephronophthisis in patients with homozygous deletion of the NPH1 locus.</title>
        <authorList>
            <person name="Caridi G."/>
            <person name="Murer L."/>
            <person name="Bellantuono R."/>
            <person name="Sorino P."/>
            <person name="Caringella D.A."/>
            <person name="Gusmano R."/>
            <person name="Ghiggeri G.M."/>
        </authorList>
    </citation>
    <scope>INVOLVEMENT IN SLSN1</scope>
</reference>
<reference key="6">
    <citation type="journal article" date="2002" name="Nat. Genet.">
        <title>The gene mutated in juvenile nephronophthisis type 4 encodes a novel protein that interacts with nephrocystin.</title>
        <authorList>
            <person name="Mollet G."/>
            <person name="Salomon R."/>
            <person name="Gribouval O."/>
            <person name="Silbermann F."/>
            <person name="Bacq D."/>
            <person name="Landthaler G."/>
            <person name="Milford D."/>
            <person name="Nayir A."/>
            <person name="Rizzoni G."/>
            <person name="Antignac C."/>
            <person name="Saunier S."/>
        </authorList>
    </citation>
    <scope>INTERACTION WITH NPHP4</scope>
</reference>
<reference key="7">
    <citation type="journal article" date="2003" name="Nat. Genet.">
        <title>Mutations in INVS encoding inversin cause nephronophthisis type 2, linking renal cystic disease to the function of primary cilia and left-right axis determination.</title>
        <authorList>
            <person name="Otto E.A."/>
            <person name="Schermer B."/>
            <person name="Obara T."/>
            <person name="O'Toole J.F."/>
            <person name="Hiller K.S."/>
            <person name="Mueller A.M."/>
            <person name="Ruf R.G."/>
            <person name="Hoefele J."/>
            <person name="Beekmann F."/>
            <person name="Landau D."/>
            <person name="Foreman J.W."/>
            <person name="Goodship J.A."/>
            <person name="Strachan T."/>
            <person name="Kispert A."/>
            <person name="Wolf M.T."/>
            <person name="Gagnadoux M.F."/>
            <person name="Nivet H."/>
            <person name="Antignac C."/>
            <person name="Walz G."/>
            <person name="Drummond I.A."/>
            <person name="Benzing T."/>
            <person name="Hildebrandt F."/>
        </authorList>
    </citation>
    <scope>INTERACTION WITH INVS</scope>
</reference>
<reference key="8">
    <citation type="journal article" date="2003" name="Nat. Genet.">
        <title>Mutations in a novel gene, NPHP3, cause adolescent nephronophthisis, tapeto-retinal degeneration and hepatic fibrosis.</title>
        <authorList>
            <person name="Olbrich H."/>
            <person name="Fliegauf M."/>
            <person name="Hoefele J."/>
            <person name="Kispert A."/>
            <person name="Otto E."/>
            <person name="Volz A."/>
            <person name="Wolf M.T."/>
            <person name="Sasmaz G."/>
            <person name="Trauer U."/>
            <person name="Reinhardt R."/>
            <person name="Sudbrak R."/>
            <person name="Antignac C."/>
            <person name="Gretz N."/>
            <person name="Walz G."/>
            <person name="Schermer B."/>
            <person name="Benzing T."/>
            <person name="Hildebrandt F."/>
            <person name="Omran H."/>
        </authorList>
    </citation>
    <scope>INTERACTION WITH NPHP3</scope>
</reference>
<reference key="9">
    <citation type="journal article" date="2005" name="EMBO J.">
        <title>Phosphorylation by casein kinase 2 induces PACS-1 binding of nephrocystin and targeting to cilia.</title>
        <authorList>
            <person name="Schermer B."/>
            <person name="Hoepker K."/>
            <person name="Omran H."/>
            <person name="Ghenoiu C."/>
            <person name="Fliegauf M."/>
            <person name="Fekete A."/>
            <person name="Horvath J."/>
            <person name="Koettgen M."/>
            <person name="Hackl M."/>
            <person name="Zschiedrich S."/>
            <person name="Huber T.B."/>
            <person name="Kramer-Zucker A."/>
            <person name="Zentgraf H."/>
            <person name="Blaukat A."/>
            <person name="Walz G."/>
            <person name="Benzing T."/>
        </authorList>
    </citation>
    <scope>PHOSPHORYLATION AT SER-121; SER-123 AND SER-126</scope>
    <scope>INTERACTION WITH PACS1</scope>
    <scope>SUBCELLULAR LOCATION</scope>
    <scope>TISSUE SPECIFICITY</scope>
    <scope>MUTAGENESIS OF SER-121; SER-123 AND SER-126</scope>
</reference>
<reference key="10">
    <citation type="journal article" date="2004" name="Am. J. Hum. Genet.">
        <title>The NPHP1 gene deletion associated with juvenile nephronophthisis is present in a subset of individuals with Joubert syndrome.</title>
        <authorList>
            <person name="Parisi M.A."/>
            <person name="Bennett C.L."/>
            <person name="Eckert M.L."/>
            <person name="Dobyns W.B."/>
            <person name="Gleeson J.G."/>
            <person name="Shaw D.W.W."/>
            <person name="McDonald R."/>
            <person name="Eddy A."/>
            <person name="Chance P.F."/>
            <person name="Glass I.A."/>
        </authorList>
    </citation>
    <scope>INVOLVEMENT IN JBTS4</scope>
</reference>
<reference key="11">
    <citation type="journal article" date="2006" name="J. Am. Soc. Nephrol.">
        <title>Nephrocystin specifically localizes to the transition zone of renal and respiratory cilia and photoreceptor connecting cilia.</title>
        <authorList>
            <person name="Fliegauf M."/>
            <person name="Horvath J."/>
            <person name="von Schnakenburg C."/>
            <person name="Olbrich H."/>
            <person name="Mueller D."/>
            <person name="Thumfart J."/>
            <person name="Schermer B."/>
            <person name="Pazour G.J."/>
            <person name="Neumann H.P."/>
            <person name="Zentgraf H."/>
            <person name="Benzing T."/>
            <person name="Omran H."/>
        </authorList>
    </citation>
    <scope>SUBCELLULAR LOCATION</scope>
    <scope>DEVELOPMENTAL STAGE</scope>
</reference>
<reference key="12">
    <citation type="journal article" date="2008" name="Biochem. Biophys. Res. Commun.">
        <title>Nephrocystin-1 interacts directly with Ack1 and is expressed in human collecting duct.</title>
        <authorList>
            <person name="Eley L."/>
            <person name="Moochhala S.H."/>
            <person name="Simms R."/>
            <person name="Hildebrandt F."/>
            <person name="Sayer J.A."/>
        </authorList>
    </citation>
    <scope>INTERACTION WITH TNK2</scope>
    <scope>TISSUE SPECIFICITY</scope>
</reference>
<reference key="13">
    <citation type="journal article" date="2008" name="Kidney Int.">
        <title>Jouberin localizes to collecting ducts and interacts with nephrocystin-1.</title>
        <authorList>
            <person name="Eley L."/>
            <person name="Gabrielides C."/>
            <person name="Adams M."/>
            <person name="Johnson C.A."/>
            <person name="Hildebrandt F."/>
            <person name="Sayer J.A."/>
        </authorList>
    </citation>
    <scope>INTERACTION WITH AHI1</scope>
</reference>
<reference key="14">
    <citation type="journal article" date="2010" name="PLoS ONE">
        <title>Nephrocystin-1 forms a complex with polycystin-1 via a polyproline motif/SH3 domain interaction and regulates the apoptotic response in mammals.</title>
        <authorList>
            <person name="Wodarczyk C."/>
            <person name="Distefano G."/>
            <person name="Rowe I."/>
            <person name="Gaetani M."/>
            <person name="Bricoli B."/>
            <person name="Muorah M."/>
            <person name="Spitaleri A."/>
            <person name="Mannella V."/>
            <person name="Ricchiuto P."/>
            <person name="Pema M."/>
            <person name="Castelli M."/>
            <person name="Casanova A.E."/>
            <person name="Mollica L."/>
            <person name="Banzi M."/>
            <person name="Boca M."/>
            <person name="Antignac C."/>
            <person name="Saunier S."/>
            <person name="Musco G."/>
            <person name="Boletta A."/>
        </authorList>
    </citation>
    <scope>INTERACTION WITH PKD1</scope>
    <scope>MUTAGENESIS OF PRO-203</scope>
</reference>
<reference key="15">
    <citation type="journal article" date="2011" name="Cell">
        <title>Mapping the NPHP-JBTS-MKS protein network reveals ciliopathy disease genes and pathways.</title>
        <authorList>
            <person name="Sang L."/>
            <person name="Miller J.J."/>
            <person name="Corbit K.C."/>
            <person name="Giles R.H."/>
            <person name="Brauer M.J."/>
            <person name="Otto E.A."/>
            <person name="Baye L.M."/>
            <person name="Wen X."/>
            <person name="Scales S.J."/>
            <person name="Kwong M."/>
            <person name="Huntzicker E.G."/>
            <person name="Sfakianos M.K."/>
            <person name="Sandoval W."/>
            <person name="Bazan J.F."/>
            <person name="Kulkarni P."/>
            <person name="Garcia-Gonzalo F.R."/>
            <person name="Seol A.D."/>
            <person name="O'Toole J.F."/>
            <person name="Held S."/>
            <person name="Reutter H.M."/>
            <person name="Lane W.S."/>
            <person name="Rafiq M.A."/>
            <person name="Noor A."/>
            <person name="Ansar M."/>
            <person name="Devi A.R."/>
            <person name="Sheffield V.C."/>
            <person name="Slusarski D.C."/>
            <person name="Vincent J.B."/>
            <person name="Doherty D.A."/>
            <person name="Hildebrandt F."/>
            <person name="Reiter J.F."/>
            <person name="Jackson P.K."/>
        </authorList>
    </citation>
    <scope>INTERACTION WITH IQCB1; INVS AND NPHP4</scope>
    <scope>SUBCELLULAR LOCATION</scope>
</reference>
<reference key="16">
    <citation type="journal article" date="2011" name="J. Biol. Chem.">
        <title>Nephrocystin-4 regulates Pyk2-induced tyrosine phosphorylation of nephrocystin-1 to control targeting to monocilia.</title>
        <authorList>
            <person name="Liebau M.C."/>
            <person name="Hopker K."/>
            <person name="Muller R.U."/>
            <person name="Schmedding I."/>
            <person name="Zank S."/>
            <person name="Schairer B."/>
            <person name="Fabretti F."/>
            <person name="Hohne M."/>
            <person name="Bartram M.P."/>
            <person name="Dafinger C."/>
            <person name="Hackl M."/>
            <person name="Burst V."/>
            <person name="Habbig S."/>
            <person name="Zentgraf H."/>
            <person name="Blaukat A."/>
            <person name="Walz G."/>
            <person name="Benzing T."/>
            <person name="Schermer B."/>
        </authorList>
    </citation>
    <scope>INTERACTION WITH PTK2B/PYK2</scope>
    <scope>PHOSPHORYLATION AT TYR-46; TYR-349 AND TYR-721</scope>
</reference>
<reference key="17">
    <citation type="journal article" date="2011" name="J. Clin. Invest.">
        <title>Mutations in KIF7 link Joubert syndrome with Sonic Hedgehog signaling and microtubule dynamics.</title>
        <authorList>
            <person name="Dafinger C."/>
            <person name="Liebau M.C."/>
            <person name="Elsayed S.M."/>
            <person name="Hellenbroich Y."/>
            <person name="Boltshauser E."/>
            <person name="Korenke G.C."/>
            <person name="Fabretti F."/>
            <person name="Janecke A.R."/>
            <person name="Ebermann I."/>
            <person name="Nurnberg G."/>
            <person name="Nurnberg P."/>
            <person name="Zentgraf H."/>
            <person name="Koerber F."/>
            <person name="Addicks K."/>
            <person name="Elsobky E."/>
            <person name="Benzing T."/>
            <person name="Schermer B."/>
            <person name="Bolz H.J."/>
        </authorList>
    </citation>
    <scope>INTERACTION WITH KIF7</scope>
</reference>
<reference key="18">
    <citation type="journal article" date="2015" name="Am. J. Hum. Genet.">
        <title>Joubert Syndrome in French Canadians and Identification of Mutations in CEP104.</title>
        <authorList>
            <consortium name="Care4Rare Canada Consortium"/>
            <person name="Srour M."/>
            <person name="Hamdan F.F."/>
            <person name="McKnight D."/>
            <person name="Davis E."/>
            <person name="Mandel H."/>
            <person name="Schwartzentruber J."/>
            <person name="Martin B."/>
            <person name="Patry L."/>
            <person name="Nassif C."/>
            <person name="Dionne-Laporte A."/>
            <person name="Ospina L.H."/>
            <person name="Lemyre E."/>
            <person name="Massicotte C."/>
            <person name="Laframboise R."/>
            <person name="Maranda B."/>
            <person name="Labuda D."/>
            <person name="Decarie J.C."/>
            <person name="Rypens F."/>
            <person name="Goldsher D."/>
            <person name="Fallet-Bianco C."/>
            <person name="Soucy J.F."/>
            <person name="Laberge A.M."/>
            <person name="Maftei C."/>
            <person name="Boycott K."/>
            <person name="Brais B."/>
            <person name="Boucher R.M."/>
            <person name="Rouleau G.A."/>
            <person name="Katsanis N."/>
            <person name="Majewski J."/>
            <person name="Elpeleg O."/>
            <person name="Kukolich M.K."/>
            <person name="Shalev S."/>
            <person name="Michaud J.L."/>
        </authorList>
    </citation>
    <scope>INVOLVEMENT IN JBTS4</scope>
</reference>
<reference key="19">
    <citation type="journal article" date="2005" name="Proteins">
        <title>Solution NMR structure of the SH3 domain of human nephrocystin and analysis of a mutation-causing juvenile nephronophthisis.</title>
        <authorList>
            <person name="le Maire A."/>
            <person name="Weber T."/>
            <person name="Saunier S."/>
            <person name="Broutin I."/>
            <person name="Antignac C."/>
            <person name="Ducruix A."/>
            <person name="Dardel F."/>
        </authorList>
    </citation>
    <scope>STRUCTURE BY NMR OF 147-212</scope>
    <scope>MUTAGENESIS OF LEU-180</scope>
</reference>
<reference key="20">
    <citation type="journal article" date="2000" name="J. Pediatr.">
        <title>Children with ocular motor apraxia type Cogan carry deletions in the gene (NPHP1) for juvenile nephronophthisis.</title>
        <authorList>
            <person name="Betz R."/>
            <person name="Rensing C."/>
            <person name="Otto E."/>
            <person name="Mincheva A."/>
            <person name="Zehnder D."/>
            <person name="Lichter P."/>
            <person name="Hildebrandt F."/>
        </authorList>
    </citation>
    <scope>VARIANT NPHP1 ARG-342</scope>
</reference>
<reference key="21">
    <citation type="journal article" date="2014" name="Am. J. Hum. Genet.">
        <title>Recurrent CNVs and SNVs at the NPHP1 locus contribute pathogenic alleles to Bardet-Biedl syndrome.</title>
        <authorList>
            <person name="Lindstrand A."/>
            <person name="Davis E.E."/>
            <person name="Carvalho C.M."/>
            <person name="Pehlivan D."/>
            <person name="Willer J.R."/>
            <person name="Tsai I.C."/>
            <person name="Ramanathan S."/>
            <person name="Zuppan C."/>
            <person name="Sabo A."/>
            <person name="Muzny D."/>
            <person name="Gibbs R."/>
            <person name="Liu P."/>
            <person name="Lewis R.A."/>
            <person name="Banin E."/>
            <person name="Lupski J.R."/>
            <person name="Clark R."/>
            <person name="Katsanis N."/>
        </authorList>
    </citation>
    <scope>VARIANT LEU-5</scope>
    <scope>CHARACTERIZATION OF VARIANT LEU-5</scope>
</reference>
<protein>
    <recommendedName>
        <fullName>Nephrocystin-1</fullName>
    </recommendedName>
    <alternativeName>
        <fullName>Juvenile nephronophthisis 1 protein</fullName>
    </alternativeName>
</protein>
<comment type="function">
    <text evidence="2">Together with BCAR1 it may play a role in the control of epithelial cell polarity (By similarity). Involved in the organization of apical junctions in kidney cells together with NPHP4 and RPGRIP1L/NPHP8 (By similarity). Does not seem to be strictly required for ciliogenesis (By similarity). Seems to help to recruit PTK2B/PYK2 to cell matrix adhesions, thereby initiating phosphorylation of PTK2B/PYK2 and PTK2B/PYK2-dependent signaling (By similarity). May play a role in the regulation of intraflagellar transport (IFT) during cilia assembly. Required for normal retina development (By similarity). In connecting photoreceptor cilia influences the movement of some IFT proteins such as IFT88 and WDR19. Involved in spermatogenesis (By similarity).</text>
</comment>
<comment type="subunit">
    <text evidence="2 7 8 9 12 14 15 16 17 18 19">Interacts with BCAR1, PTK2B/PYK2 and tensin. Interacts with INVS and NPHP3. Interacts with PACS1; the interaction is dependent on NPHP1 phosphorylation by CK2. Interacts with KIF7. Interacts with AHI1 and TNK2. Interacts with NPHP4 in a complex containing NPHP1, NPHP4 and RPGRIP1L. Interacts with IQCB1; the interaction likely requires additional interactors. Interacts with ANKS3 (By similarity). Interacts with SPATA7 (By similarity). Interacts with FLNA (By similarity).</text>
</comment>
<comment type="interaction">
    <interactant intactId="EBI-953828">
        <id>O15259</id>
    </interactant>
    <interactant intactId="EBI-77818">
        <id>Q13444</id>
        <label>ADAM15</label>
    </interactant>
    <organismsDiffer>false</organismsDiffer>
    <experiments>4</experiments>
</comment>
<comment type="interaction">
    <interactant intactId="EBI-953828">
        <id>O15259</id>
    </interactant>
    <interactant intactId="EBI-1049056">
        <id>Q8N157</id>
        <label>AHI1</label>
    </interactant>
    <organismsDiffer>false</organismsDiffer>
    <experiments>4</experiments>
</comment>
<comment type="interaction">
    <interactant intactId="EBI-953828">
        <id>O15259</id>
    </interactant>
    <interactant intactId="EBI-4281852">
        <id>O75161</id>
        <label>NPHP4</label>
    </interactant>
    <organismsDiffer>false</organismsDiffer>
    <experiments>19</experiments>
</comment>
<comment type="interaction">
    <interactant intactId="EBI-953828">
        <id>O15259</id>
    </interactant>
    <interactant intactId="EBI-1752013">
        <id>P98161</id>
        <label>PKD1</label>
    </interactant>
    <organismsDiffer>false</organismsDiffer>
    <experiments>2</experiments>
</comment>
<comment type="interaction">
    <interactant intactId="EBI-953828">
        <id>O15259</id>
    </interactant>
    <interactant intactId="EBI-298640">
        <id>Q14289</id>
        <label>PTK2B</label>
    </interactant>
    <organismsDiffer>false</organismsDiffer>
    <experiments>2</experiments>
</comment>
<comment type="interaction">
    <interactant intactId="EBI-953828">
        <id>O15259</id>
    </interactant>
    <interactant intactId="EBI-6558417">
        <id>Q92834</id>
        <label>RPGR</label>
    </interactant>
    <organismsDiffer>false</organismsDiffer>
    <experiments>3</experiments>
</comment>
<comment type="interaction">
    <interactant intactId="EBI-953828">
        <id>O15259</id>
    </interactant>
    <interactant intactId="EBI-353675">
        <id>Q9Y265</id>
        <label>RUVBL1</label>
    </interactant>
    <organismsDiffer>false</organismsDiffer>
    <experiments>2</experiments>
</comment>
<comment type="subcellular location">
    <subcellularLocation>
        <location evidence="2">Cell junction</location>
    </subcellularLocation>
    <subcellularLocation>
        <location evidence="2">Cell junction</location>
        <location evidence="2">Adherens junction</location>
    </subcellularLocation>
    <subcellularLocation>
        <location evidence="13">Cell projection</location>
        <location evidence="13">Cilium</location>
    </subcellularLocation>
    <subcellularLocation>
        <location evidence="12 13">Cytoplasm</location>
        <location evidence="12 13">Cytoskeleton</location>
        <location evidence="12 13">Cilium axoneme</location>
    </subcellularLocation>
    <subcellularLocation>
        <location>Cell junction</location>
        <location>Tight junction</location>
    </subcellularLocation>
    <text evidence="2 12 13">In the retinal photoreceptor cell layer, localizes at the connecting cilium (By similarity). Colocalizes with E-cadherin and BCAR1 at or near the cell-cell adherens junctions (By similarity). Localized to respiratory cilia axoneme (PubMed:16308564, PubMed:16885411). Localized to the transition zone of respiratory cilia (PubMed:16885411). Localized to the transition zone of photoreceptor-connecting cilia and renal monocilia (By similarity). In cultured renal cells, it localizes diffusely in the cytoplasm but, as cells approach confluence, it accumulates at basolateral tight junctions (By similarity).</text>
</comment>
<comment type="alternative products">
    <event type="alternative splicing"/>
    <isoform>
        <id>O15259-1</id>
        <name>1</name>
        <name>NPHP1</name>
        <sequence type="displayed"/>
    </isoform>
    <isoform>
        <id>O15259-2</id>
        <name>2</name>
        <name>NPHP1-8A</name>
        <sequence type="described" ref="VSP_003424"/>
    </isoform>
    <isoform>
        <id>O15259-3</id>
        <name>3</name>
        <sequence type="described" ref="VSP_010073 VSP_010074"/>
    </isoform>
    <isoform>
        <id>O15259-4</id>
        <name>4</name>
        <sequence type="described" ref="VSP_024381"/>
    </isoform>
</comment>
<comment type="tissue specificity">
    <text evidence="12 14">Widespread expression, with highest levels in pituitary gland, spinal cord, thyroid gland, testis, skeletal muscle, lymph node and trachea. Weakly expressed in heart, kidney and pancreas. Expressed in nasal epithelial cells (at protein level) (PubMed:16308564). Expressed in the renal collecting duct (at protein level) (PubMed:18477472).</text>
</comment>
<comment type="developmental stage">
    <text evidence="13">During in vitro ciliogenesis translocalizes from the cytoplasm to the ciliary transition zone during epithelial cell polarization.</text>
</comment>
<comment type="domain">
    <text evidence="1">The SH3 domain mediates the stable interaction with Cas.</text>
</comment>
<comment type="PTM">
    <text evidence="12 17">Phosphorylation by CK2 is required for the interaction with PACS1 and the targeting to the base region of cilia.</text>
</comment>
<comment type="disease" evidence="6">
    <disease id="DI-00803">
        <name>Nephronophthisis 1</name>
        <acronym>NPHP1</acronym>
        <description>An autosomal recessive inherited disease characterized by anemia, polyuria, polydipsia, isosthenuria and death in uremia. Symmetrical destruction of the kidneys involving both tubules and glomeruli occurs. The underlying pathology is a chronic tubulo-interstitial nephropathy with characteristic tubular basement membrane thickening and medullary cyst formation. Associations with extrarenal symptoms, especially ocular lesions, are frequent. The age at death ranges from about 4 to 15 years.</description>
        <dbReference type="MIM" id="256100"/>
    </disease>
    <text>The disease is caused by variants affecting the gene represented in this entry.</text>
</comment>
<comment type="disease" evidence="22">
    <disease id="DI-01009">
        <name>Senior-Loken syndrome 1</name>
        <acronym>SLSN1</acronym>
        <description>A renal-retinal disorder characterized by progressive wasting of the filtering unit of the kidney (nephronophthisis), with or without medullary cystic renal disease, and progressive eye disease. Typically this disorder becomes apparent during the first year of life.</description>
        <dbReference type="MIM" id="266900"/>
    </disease>
    <text>The disease is caused by variants affecting the gene represented in this entry.</text>
</comment>
<comment type="disease" evidence="10 21">
    <disease id="DI-00607">
        <name>Joubert syndrome 4</name>
        <acronym>JBTS4</acronym>
        <description>A disorder presenting with cerebellar ataxia, oculomotor apraxia, hypotonia, neonatal breathing abnormalities and psychomotor delay. Neuroradiologically, it is characterized by cerebellar vermian hypoplasia/aplasia, thickened and reoriented superior cerebellar peduncles, and an abnormally large interpeduncular fossa, giving the appearance of a molar tooth on transaxial slices (molar tooth sign). Additional variable features include retinal dystrophy and renal disease. Joubert syndrome type 4 is a phenotypically mild form.</description>
        <dbReference type="MIM" id="609583"/>
    </disease>
    <text>The disease is caused by variants affecting the gene represented in this entry.</text>
</comment>
<comment type="miscellaneous">
    <text>Nephronophthisis type 1 patients deficient for NPHP1 show normal overall integrity of respiratory cilia.</text>
</comment>
<comment type="similarity">
    <text evidence="26">Belongs to the nephrocystin-1 family.</text>
</comment>
<sequence length="732" mass="83299">MLARRQRDPLQALRRRNQELKQQVDSLLSESQLKEALEPNKRQHIYQRCIQLKQAIDENKNALQKLSKADESAPVANYNQRKEEEHTLLDKLTQQLQGLAVTISRENITEVGAPTEEEEESESEDSEDSGGEEEDAEEEEEEKEENESHKWSTGEEYIAVGDFTAQQVGDLTFKKGEILLVIEKKPDGWWIAKDAKGNEGLVPRTYLEPYSEEEEGQESSEEGSEEDVEAVDETADGAEVKQRTDPHWSAVQKAISEAGIFCLVNHVSFCYLIVLMRNRMETVEDTNGSETGFRAWNVQSRGRIFLVSKPVLQINTVDVLTTMGAIPAGFRPSTLSQLLEEGNQFRANYFLQPELMPSQLAFRDLMWDATEGTIRSRPSRISLILTLWSCKMIPLPGMSIQVLSRHVRLCLFDGNKVLSNIHTVRATWQPKKPKTWTFSPQVTRILPCLLDGDCFIRSNSASPDLGILFELGISYIRNSTGERGELSCGWVFLKLFDASGVPIPAKTYELFLNGGTPYEKGIEVDPSISRRAHGSVFYQIMTMRRQPQLLVKLRSLNRRSRNVLSLLPETLIGNMCSIHLLIFYRQILGDVLLKDRMSLQSTDLISHPMLATFPMLLEQPDVMDALRSSWAGKESTLKRSEKRDKEFLKSTFLLVYHDCVLPLLHSTRLPPFRWAEEETETARWKVITDFLKQNQENQGALQALLSPDGVHEPFDLSEQTYDFLGEMRKNAV</sequence>
<evidence type="ECO:0000250" key="1"/>
<evidence type="ECO:0000250" key="2">
    <source>
        <dbReference type="UniProtKB" id="Q9QY53"/>
    </source>
</evidence>
<evidence type="ECO:0000255" key="3"/>
<evidence type="ECO:0000255" key="4">
    <source>
        <dbReference type="PROSITE-ProRule" id="PRU00192"/>
    </source>
</evidence>
<evidence type="ECO:0000256" key="5">
    <source>
        <dbReference type="SAM" id="MobiDB-lite"/>
    </source>
</evidence>
<evidence type="ECO:0000269" key="6">
    <source>
    </source>
</evidence>
<evidence type="ECO:0000269" key="7">
    <source>
    </source>
</evidence>
<evidence type="ECO:0000269" key="8">
    <source>
    </source>
</evidence>
<evidence type="ECO:0000269" key="9">
    <source>
    </source>
</evidence>
<evidence type="ECO:0000269" key="10">
    <source>
    </source>
</evidence>
<evidence type="ECO:0000269" key="11">
    <source>
    </source>
</evidence>
<evidence type="ECO:0000269" key="12">
    <source>
    </source>
</evidence>
<evidence type="ECO:0000269" key="13">
    <source>
    </source>
</evidence>
<evidence type="ECO:0000269" key="14">
    <source>
    </source>
</evidence>
<evidence type="ECO:0000269" key="15">
    <source>
    </source>
</evidence>
<evidence type="ECO:0000269" key="16">
    <source>
    </source>
</evidence>
<evidence type="ECO:0000269" key="17">
    <source>
    </source>
</evidence>
<evidence type="ECO:0000269" key="18">
    <source>
    </source>
</evidence>
<evidence type="ECO:0000269" key="19">
    <source>
    </source>
</evidence>
<evidence type="ECO:0000269" key="20">
    <source>
    </source>
</evidence>
<evidence type="ECO:0000269" key="21">
    <source>
    </source>
</evidence>
<evidence type="ECO:0000269" key="22">
    <source>
    </source>
</evidence>
<evidence type="ECO:0000303" key="23">
    <source>
    </source>
</evidence>
<evidence type="ECO:0000303" key="24">
    <source>
    </source>
</evidence>
<evidence type="ECO:0000303" key="25">
    <source>
    </source>
</evidence>
<evidence type="ECO:0000305" key="26"/>
<evidence type="ECO:0000305" key="27">
    <source>
    </source>
</evidence>
<evidence type="ECO:0007829" key="28">
    <source>
        <dbReference type="PDB" id="1S1N"/>
    </source>
</evidence>
<evidence type="ECO:0007829" key="29">
    <source>
        <dbReference type="PDB" id="6O1Q"/>
    </source>
</evidence>
<proteinExistence type="evidence at protein level"/>
<gene>
    <name type="primary">NPHP1</name>
    <name type="synonym">NPH1</name>
</gene>
<accession>O15259</accession>
<accession>O14837</accession>
<dbReference type="EMBL" id="AJ001815">
    <property type="protein sequence ID" value="CAA05030.1"/>
    <property type="molecule type" value="mRNA"/>
</dbReference>
<dbReference type="EMBL" id="AF023674">
    <property type="protein sequence ID" value="AAC51771.1"/>
    <property type="molecule type" value="mRNA"/>
</dbReference>
<dbReference type="EMBL" id="AC013268">
    <property type="status" value="NOT_ANNOTATED_CDS"/>
    <property type="molecule type" value="Genomic_DNA"/>
</dbReference>
<dbReference type="EMBL" id="AC140479">
    <property type="status" value="NOT_ANNOTATED_CDS"/>
    <property type="molecule type" value="Genomic_DNA"/>
</dbReference>
<dbReference type="EMBL" id="BC009789">
    <property type="status" value="NOT_ANNOTATED_CDS"/>
    <property type="molecule type" value="mRNA"/>
</dbReference>
<dbReference type="EMBL" id="BC062574">
    <property type="protein sequence ID" value="AAH62574.1"/>
    <property type="molecule type" value="mRNA"/>
</dbReference>
<dbReference type="CCDS" id="CCDS2086.1">
    <molecule id="O15259-4"/>
</dbReference>
<dbReference type="CCDS" id="CCDS46384.1">
    <molecule id="O15259-3"/>
</dbReference>
<dbReference type="CCDS" id="CCDS46385.1">
    <molecule id="O15259-1"/>
</dbReference>
<dbReference type="CCDS" id="CCDS46386.1">
    <molecule id="O15259-2"/>
</dbReference>
<dbReference type="RefSeq" id="NP_000263.2">
    <molecule id="O15259-4"/>
    <property type="nucleotide sequence ID" value="NM_000272.3"/>
</dbReference>
<dbReference type="RefSeq" id="NP_001121650.1">
    <molecule id="O15259-2"/>
    <property type="nucleotide sequence ID" value="NM_001128178.3"/>
</dbReference>
<dbReference type="RefSeq" id="NP_001121651.1">
    <molecule id="O15259-3"/>
    <property type="nucleotide sequence ID" value="NM_001128179.3"/>
</dbReference>
<dbReference type="RefSeq" id="NP_997064.2">
    <molecule id="O15259-1"/>
    <property type="nucleotide sequence ID" value="NM_207181.4"/>
</dbReference>
<dbReference type="PDB" id="1S1N">
    <property type="method" value="NMR"/>
    <property type="chains" value="A=147-212"/>
</dbReference>
<dbReference type="PDB" id="6O1Q">
    <property type="method" value="NMR"/>
    <property type="chains" value="A=1-115"/>
</dbReference>
<dbReference type="PDBsum" id="1S1N"/>
<dbReference type="PDBsum" id="6O1Q"/>
<dbReference type="SMR" id="O15259"/>
<dbReference type="BioGRID" id="110927">
    <property type="interactions" value="99"/>
</dbReference>
<dbReference type="ComplexPortal" id="CPX-2806">
    <property type="entry name" value="NPHP transition zone complex"/>
</dbReference>
<dbReference type="CORUM" id="O15259"/>
<dbReference type="FunCoup" id="O15259">
    <property type="interactions" value="572"/>
</dbReference>
<dbReference type="IntAct" id="O15259">
    <property type="interactions" value="87"/>
</dbReference>
<dbReference type="MINT" id="O15259"/>
<dbReference type="STRING" id="9606.ENSP00000313169"/>
<dbReference type="GlyGen" id="O15259">
    <property type="glycosylation" value="1 site, 1 O-linked glycan (1 site)"/>
</dbReference>
<dbReference type="iPTMnet" id="O15259"/>
<dbReference type="PhosphoSitePlus" id="O15259"/>
<dbReference type="BioMuta" id="NPHP1"/>
<dbReference type="jPOST" id="O15259"/>
<dbReference type="MassIVE" id="O15259"/>
<dbReference type="PaxDb" id="9606-ENSP00000313169"/>
<dbReference type="PeptideAtlas" id="O15259"/>
<dbReference type="ProteomicsDB" id="48545">
    <molecule id="O15259-1"/>
</dbReference>
<dbReference type="ProteomicsDB" id="48546">
    <molecule id="O15259-2"/>
</dbReference>
<dbReference type="ProteomicsDB" id="48547">
    <molecule id="O15259-3"/>
</dbReference>
<dbReference type="ProteomicsDB" id="48548">
    <molecule id="O15259-4"/>
</dbReference>
<dbReference type="ABCD" id="O15259">
    <property type="antibodies" value="1 sequenced antibody"/>
</dbReference>
<dbReference type="Antibodypedia" id="18009">
    <property type="antibodies" value="151 antibodies from 26 providers"/>
</dbReference>
<dbReference type="DNASU" id="4867"/>
<dbReference type="Ensembl" id="ENST00000316534.8">
    <molecule id="O15259-4"/>
    <property type="protein sequence ID" value="ENSP00000313169.4"/>
    <property type="gene ID" value="ENSG00000144061.14"/>
</dbReference>
<dbReference type="Ensembl" id="ENST00000355301.8">
    <molecule id="O15259-3"/>
    <property type="protein sequence ID" value="ENSP00000347452.4"/>
    <property type="gene ID" value="ENSG00000144061.14"/>
</dbReference>
<dbReference type="Ensembl" id="ENST00000393272.7">
    <molecule id="O15259-1"/>
    <property type="protein sequence ID" value="ENSP00000376953.3"/>
    <property type="gene ID" value="ENSG00000144061.14"/>
</dbReference>
<dbReference type="Ensembl" id="ENST00000445609.7">
    <molecule id="O15259-2"/>
    <property type="protein sequence ID" value="ENSP00000389879.3"/>
    <property type="gene ID" value="ENSG00000144061.14"/>
</dbReference>
<dbReference type="Ensembl" id="ENST00000676053.1">
    <molecule id="O15259-3"/>
    <property type="protein sequence ID" value="ENSP00000502475.1"/>
    <property type="gene ID" value="ENSG00000144061.14"/>
</dbReference>
<dbReference type="GeneID" id="4867"/>
<dbReference type="KEGG" id="hsa:4867"/>
<dbReference type="MANE-Select" id="ENST00000445609.7">
    <molecule id="O15259-2"/>
    <property type="protein sequence ID" value="ENSP00000389879.3"/>
    <property type="RefSeq nucleotide sequence ID" value="NM_001128178.3"/>
    <property type="RefSeq protein sequence ID" value="NP_001121650.1"/>
</dbReference>
<dbReference type="UCSC" id="uc002tfl.6">
    <molecule id="O15259-1"/>
    <property type="organism name" value="human"/>
</dbReference>
<dbReference type="AGR" id="HGNC:7905"/>
<dbReference type="CTD" id="4867"/>
<dbReference type="DisGeNET" id="4867"/>
<dbReference type="GeneCards" id="NPHP1"/>
<dbReference type="GeneReviews" id="NPHP1"/>
<dbReference type="HGNC" id="HGNC:7905">
    <property type="gene designation" value="NPHP1"/>
</dbReference>
<dbReference type="HPA" id="ENSG00000144061">
    <property type="expression patterns" value="Tissue enhanced (choroid plexus, skeletal muscle)"/>
</dbReference>
<dbReference type="MalaCards" id="NPHP1"/>
<dbReference type="MIM" id="256100">
    <property type="type" value="phenotype"/>
</dbReference>
<dbReference type="MIM" id="266900">
    <property type="type" value="phenotype"/>
</dbReference>
<dbReference type="MIM" id="607100">
    <property type="type" value="gene"/>
</dbReference>
<dbReference type="MIM" id="609583">
    <property type="type" value="phenotype"/>
</dbReference>
<dbReference type="neXtProt" id="NX_O15259"/>
<dbReference type="OpenTargets" id="ENSG00000144061"/>
<dbReference type="Orphanet" id="110">
    <property type="disease" value="Bardet-Biedl syndrome"/>
</dbReference>
<dbReference type="Orphanet" id="220497">
    <property type="disease" value="Joubert syndrome with renal defect"/>
</dbReference>
<dbReference type="Orphanet" id="93592">
    <property type="disease" value="Juvenile nephronophthisis"/>
</dbReference>
<dbReference type="Orphanet" id="3156">
    <property type="disease" value="Senior-Loken syndrome"/>
</dbReference>
<dbReference type="PharmGKB" id="PA31706"/>
<dbReference type="VEuPathDB" id="HostDB:ENSG00000144061"/>
<dbReference type="eggNOG" id="ENOG502QU7K">
    <property type="taxonomic scope" value="Eukaryota"/>
</dbReference>
<dbReference type="GeneTree" id="ENSGT00390000007701"/>
<dbReference type="HOGENOM" id="CLU_024987_1_0_1"/>
<dbReference type="InParanoid" id="O15259"/>
<dbReference type="OMA" id="CYLIALM"/>
<dbReference type="OrthoDB" id="5340910at2759"/>
<dbReference type="PAN-GO" id="O15259">
    <property type="GO annotations" value="3 GO annotations based on evolutionary models"/>
</dbReference>
<dbReference type="PhylomeDB" id="O15259"/>
<dbReference type="TreeFam" id="TF320679"/>
<dbReference type="PathwayCommons" id="O15259"/>
<dbReference type="Reactome" id="R-HSA-5620912">
    <property type="pathway name" value="Anchoring of the basal body to the plasma membrane"/>
</dbReference>
<dbReference type="SignaLink" id="O15259"/>
<dbReference type="SIGNOR" id="O15259"/>
<dbReference type="BioGRID-ORCS" id="4867">
    <property type="hits" value="17 hits in 1148 CRISPR screens"/>
</dbReference>
<dbReference type="ChiTaRS" id="NPHP1">
    <property type="organism name" value="human"/>
</dbReference>
<dbReference type="EvolutionaryTrace" id="O15259"/>
<dbReference type="GeneWiki" id="NPHP1"/>
<dbReference type="GenomeRNAi" id="4867"/>
<dbReference type="Pharos" id="O15259">
    <property type="development level" value="Tbio"/>
</dbReference>
<dbReference type="PRO" id="PR:O15259"/>
<dbReference type="Proteomes" id="UP000005640">
    <property type="component" value="Chromosome 2"/>
</dbReference>
<dbReference type="RNAct" id="O15259">
    <property type="molecule type" value="protein"/>
</dbReference>
<dbReference type="Bgee" id="ENSG00000144061">
    <property type="expression patterns" value="Expressed in right uterine tube and 117 other cell types or tissues"/>
</dbReference>
<dbReference type="ExpressionAtlas" id="O15259">
    <property type="expression patterns" value="baseline and differential"/>
</dbReference>
<dbReference type="GO" id="GO:0005912">
    <property type="term" value="C:adherens junction"/>
    <property type="evidence" value="ECO:0007669"/>
    <property type="project" value="UniProtKB-SubCell"/>
</dbReference>
<dbReference type="GO" id="GO:0005923">
    <property type="term" value="C:bicellular tight junction"/>
    <property type="evidence" value="ECO:0007669"/>
    <property type="project" value="UniProtKB-SubCell"/>
</dbReference>
<dbReference type="GO" id="GO:0005911">
    <property type="term" value="C:cell-cell junction"/>
    <property type="evidence" value="ECO:0000314"/>
    <property type="project" value="UniProtKB"/>
</dbReference>
<dbReference type="GO" id="GO:0005929">
    <property type="term" value="C:cilium"/>
    <property type="evidence" value="ECO:0000318"/>
    <property type="project" value="GO_Central"/>
</dbReference>
<dbReference type="GO" id="GO:0005737">
    <property type="term" value="C:cytoplasm"/>
    <property type="evidence" value="ECO:0000318"/>
    <property type="project" value="GO_Central"/>
</dbReference>
<dbReference type="GO" id="GO:0005856">
    <property type="term" value="C:cytoskeleton"/>
    <property type="evidence" value="ECO:0007669"/>
    <property type="project" value="UniProtKB-KW"/>
</dbReference>
<dbReference type="GO" id="GO:0005829">
    <property type="term" value="C:cytosol"/>
    <property type="evidence" value="ECO:0000304"/>
    <property type="project" value="Reactome"/>
</dbReference>
<dbReference type="GO" id="GO:0016020">
    <property type="term" value="C:membrane"/>
    <property type="evidence" value="ECO:0000303"/>
    <property type="project" value="UniProtKB"/>
</dbReference>
<dbReference type="GO" id="GO:0031514">
    <property type="term" value="C:motile cilium"/>
    <property type="evidence" value="ECO:0000314"/>
    <property type="project" value="UniProtKB"/>
</dbReference>
<dbReference type="GO" id="GO:0032391">
    <property type="term" value="C:photoreceptor connecting cilium"/>
    <property type="evidence" value="ECO:0000250"/>
    <property type="project" value="UniProtKB"/>
</dbReference>
<dbReference type="GO" id="GO:0005198">
    <property type="term" value="F:structural molecule activity"/>
    <property type="evidence" value="ECO:0000303"/>
    <property type="project" value="UniProtKB"/>
</dbReference>
<dbReference type="GO" id="GO:0030036">
    <property type="term" value="P:actin cytoskeleton organization"/>
    <property type="evidence" value="ECO:0000303"/>
    <property type="project" value="UniProtKB"/>
</dbReference>
<dbReference type="GO" id="GO:0030030">
    <property type="term" value="P:cell projection organization"/>
    <property type="evidence" value="ECO:0000250"/>
    <property type="project" value="UniProtKB"/>
</dbReference>
<dbReference type="GO" id="GO:0098609">
    <property type="term" value="P:cell-cell adhesion"/>
    <property type="evidence" value="ECO:0000303"/>
    <property type="project" value="UniProtKB"/>
</dbReference>
<dbReference type="GO" id="GO:1903348">
    <property type="term" value="P:positive regulation of bicellular tight junction assembly"/>
    <property type="evidence" value="ECO:0000315"/>
    <property type="project" value="UniProtKB"/>
</dbReference>
<dbReference type="GO" id="GO:0090251">
    <property type="term" value="P:protein localization involved in establishment of planar polarity"/>
    <property type="evidence" value="ECO:0000318"/>
    <property type="project" value="GO_Central"/>
</dbReference>
<dbReference type="GO" id="GO:0060041">
    <property type="term" value="P:retina development in camera-type eye"/>
    <property type="evidence" value="ECO:0000250"/>
    <property type="project" value="UniProtKB"/>
</dbReference>
<dbReference type="GO" id="GO:0007165">
    <property type="term" value="P:signal transduction"/>
    <property type="evidence" value="ECO:0000303"/>
    <property type="project" value="UniProtKB"/>
</dbReference>
<dbReference type="GO" id="GO:0048515">
    <property type="term" value="P:spermatid differentiation"/>
    <property type="evidence" value="ECO:0000250"/>
    <property type="project" value="UniProtKB"/>
</dbReference>
<dbReference type="GO" id="GO:0007632">
    <property type="term" value="P:visual behavior"/>
    <property type="evidence" value="ECO:0000303"/>
    <property type="project" value="UniProtKB"/>
</dbReference>
<dbReference type="CDD" id="cd11770">
    <property type="entry name" value="SH3_Nephrocystin"/>
    <property type="match status" value="1"/>
</dbReference>
<dbReference type="FunFam" id="2.30.30.40:FF:000171">
    <property type="entry name" value="Nephrocystin 1"/>
    <property type="match status" value="1"/>
</dbReference>
<dbReference type="Gene3D" id="2.30.30.40">
    <property type="entry name" value="SH3 Domains"/>
    <property type="match status" value="1"/>
</dbReference>
<dbReference type="InterPro" id="IPR039687">
    <property type="entry name" value="NPHP1"/>
</dbReference>
<dbReference type="InterPro" id="IPR030642">
    <property type="entry name" value="NPHP1_SH3"/>
</dbReference>
<dbReference type="InterPro" id="IPR036028">
    <property type="entry name" value="SH3-like_dom_sf"/>
</dbReference>
<dbReference type="InterPro" id="IPR001452">
    <property type="entry name" value="SH3_domain"/>
</dbReference>
<dbReference type="PANTHER" id="PTHR15176">
    <property type="entry name" value="NEPHROCYSTIN"/>
    <property type="match status" value="1"/>
</dbReference>
<dbReference type="PANTHER" id="PTHR15176:SF1">
    <property type="entry name" value="NEPHROCYSTIN-1"/>
    <property type="match status" value="1"/>
</dbReference>
<dbReference type="Pfam" id="PF00018">
    <property type="entry name" value="SH3_1"/>
    <property type="match status" value="1"/>
</dbReference>
<dbReference type="SMART" id="SM00326">
    <property type="entry name" value="SH3"/>
    <property type="match status" value="1"/>
</dbReference>
<dbReference type="SUPFAM" id="SSF50044">
    <property type="entry name" value="SH3-domain"/>
    <property type="match status" value="1"/>
</dbReference>
<dbReference type="PROSITE" id="PS50002">
    <property type="entry name" value="SH3"/>
    <property type="match status" value="1"/>
</dbReference>
<feature type="chain" id="PRO_0000159585" description="Nephrocystin-1">
    <location>
        <begin position="1"/>
        <end position="732"/>
    </location>
</feature>
<feature type="domain" description="SH3" evidence="4">
    <location>
        <begin position="152"/>
        <end position="212"/>
    </location>
</feature>
<feature type="region of interest" description="Disordered" evidence="5">
    <location>
        <begin position="103"/>
        <end position="153"/>
    </location>
</feature>
<feature type="region of interest" description="Disordered" evidence="5">
    <location>
        <begin position="205"/>
        <end position="244"/>
    </location>
</feature>
<feature type="coiled-coil region" evidence="3">
    <location>
        <begin position="3"/>
        <end position="105"/>
    </location>
</feature>
<feature type="coiled-coil region" evidence="3">
    <location>
        <begin position="127"/>
        <end position="150"/>
    </location>
</feature>
<feature type="compositionally biased region" description="Acidic residues" evidence="5">
    <location>
        <begin position="115"/>
        <end position="145"/>
    </location>
</feature>
<feature type="compositionally biased region" description="Acidic residues" evidence="5">
    <location>
        <begin position="210"/>
        <end position="236"/>
    </location>
</feature>
<feature type="modified residue" description="Phosphotyrosine; by FAK2" evidence="17">
    <location>
        <position position="46"/>
    </location>
</feature>
<feature type="modified residue" description="Phosphoserine; by CK2" evidence="27">
    <location>
        <position position="121"/>
    </location>
</feature>
<feature type="modified residue" description="Phosphoserine; by CK2" evidence="27">
    <location>
        <position position="123"/>
    </location>
</feature>
<feature type="modified residue" description="Phosphoserine; by CK2" evidence="27">
    <location>
        <position position="126"/>
    </location>
</feature>
<feature type="modified residue" description="Phosphotyrosine; by FAK2" evidence="17">
    <location>
        <position position="349"/>
    </location>
</feature>
<feature type="modified residue" description="Phosphotyrosine; by SRC" evidence="17">
    <location>
        <position position="721"/>
    </location>
</feature>
<feature type="splice variant" id="VSP_010073" description="In isoform 3." evidence="23">
    <location>
        <begin position="49"/>
        <end position="110"/>
    </location>
</feature>
<feature type="splice variant" id="VSP_010074" description="In isoform 3." evidence="23">
    <location>
        <begin position="258"/>
        <end position="313"/>
    </location>
</feature>
<feature type="splice variant" id="VSP_003424" description="In isoform 2." evidence="25">
    <location>
        <begin position="258"/>
        <end position="312"/>
    </location>
</feature>
<feature type="splice variant" id="VSP_024381" description="In isoform 4." evidence="24">
    <original>Q</original>
    <variation>QQ</variation>
    <location>
        <position position="313"/>
    </location>
</feature>
<feature type="sequence variant" id="VAR_077633" description="Changed function; unable to rescue the corresponding loss of function zebrafish mutant which displays a cilium function alteration phenotype; dbSNP:rs190983114." evidence="20">
    <original>R</original>
    <variation>L</variation>
    <location>
        <position position="5"/>
    </location>
</feature>
<feature type="sequence variant" id="VAR_012160" description="In NPHP1; patients show Cogan-type congenital ocular motor apraxia; dbSNP:rs121907899." evidence="6">
    <original>G</original>
    <variation>R</variation>
    <location>
        <position position="342"/>
    </location>
</feature>
<feature type="mutagenesis site" description="Impairs interaction with PACS1; when associated with A-123 and A-126." evidence="12">
    <original>S</original>
    <variation>A</variation>
    <location>
        <position position="121"/>
    </location>
</feature>
<feature type="mutagenesis site" description="Impairs interaction with PACS1; when associated with A-121 and A-126." evidence="12">
    <original>S</original>
    <variation>A</variation>
    <location>
        <position position="123"/>
    </location>
</feature>
<feature type="mutagenesis site" description="Impairs interaction with PACS1; when associated with A-121 and A-123." evidence="12">
    <original>S</original>
    <variation>A</variation>
    <location>
        <position position="126"/>
    </location>
</feature>
<feature type="mutagenesis site" description="Loss of SH3 domain fold." evidence="11">
    <original>L</original>
    <variation>P</variation>
    <location>
        <position position="180"/>
    </location>
</feature>
<feature type="mutagenesis site" description="Does not affect fold stability, as assessed by circular dichroism thermal denaturation melting curves and by NMR spectroscopy. Affects interaction with PKD1." evidence="16">
    <original>P</original>
    <variation>L</variation>
    <location>
        <position position="203"/>
    </location>
</feature>
<feature type="helix" evidence="29">
    <location>
        <begin position="9"/>
        <end position="31"/>
    </location>
</feature>
<feature type="helix" evidence="29">
    <location>
        <begin position="35"/>
        <end position="37"/>
    </location>
</feature>
<feature type="helix" evidence="29">
    <location>
        <begin position="39"/>
        <end position="65"/>
    </location>
</feature>
<feature type="turn" evidence="29">
    <location>
        <begin position="69"/>
        <end position="72"/>
    </location>
</feature>
<feature type="helix" evidence="29">
    <location>
        <begin position="77"/>
        <end position="104"/>
    </location>
</feature>
<feature type="strand" evidence="28">
    <location>
        <begin position="155"/>
        <end position="159"/>
    </location>
</feature>
<feature type="strand" evidence="28">
    <location>
        <begin position="166"/>
        <end position="169"/>
    </location>
</feature>
<feature type="strand" evidence="28">
    <location>
        <begin position="175"/>
        <end position="181"/>
    </location>
</feature>
<feature type="strand" evidence="28">
    <location>
        <begin position="186"/>
        <end position="193"/>
    </location>
</feature>
<feature type="strand" evidence="28">
    <location>
        <begin position="195"/>
        <end position="197"/>
    </location>
</feature>
<feature type="strand" evidence="28">
    <location>
        <begin position="199"/>
        <end position="204"/>
    </location>
</feature>
<feature type="strand" evidence="28">
    <location>
        <begin position="207"/>
        <end position="209"/>
    </location>
</feature>
<name>NPHP1_HUMAN</name>
<organism>
    <name type="scientific">Homo sapiens</name>
    <name type="common">Human</name>
    <dbReference type="NCBI Taxonomy" id="9606"/>
    <lineage>
        <taxon>Eukaryota</taxon>
        <taxon>Metazoa</taxon>
        <taxon>Chordata</taxon>
        <taxon>Craniata</taxon>
        <taxon>Vertebrata</taxon>
        <taxon>Euteleostomi</taxon>
        <taxon>Mammalia</taxon>
        <taxon>Eutheria</taxon>
        <taxon>Euarchontoglires</taxon>
        <taxon>Primates</taxon>
        <taxon>Haplorrhini</taxon>
        <taxon>Catarrhini</taxon>
        <taxon>Hominidae</taxon>
        <taxon>Homo</taxon>
    </lineage>
</organism>